<name>OR5T9_MOUSE</name>
<comment type="function">
    <text>Potential odorant receptor.</text>
</comment>
<comment type="subcellular location">
    <subcellularLocation>
        <location evidence="3">Cell membrane</location>
        <topology evidence="1">Multi-pass membrane protein</topology>
    </subcellularLocation>
</comment>
<comment type="similarity">
    <text evidence="2">Belongs to the G-protein coupled receptor 1 family.</text>
</comment>
<keyword id="KW-1003">Cell membrane</keyword>
<keyword id="KW-1015">Disulfide bond</keyword>
<keyword id="KW-0297">G-protein coupled receptor</keyword>
<keyword id="KW-0325">Glycoprotein</keyword>
<keyword id="KW-0472">Membrane</keyword>
<keyword id="KW-0552">Olfaction</keyword>
<keyword id="KW-0675">Receptor</keyword>
<keyword id="KW-1185">Reference proteome</keyword>
<keyword id="KW-0716">Sensory transduction</keyword>
<keyword id="KW-0807">Transducer</keyword>
<keyword id="KW-0812">Transmembrane</keyword>
<keyword id="KW-1133">Transmembrane helix</keyword>
<evidence type="ECO:0000255" key="1"/>
<evidence type="ECO:0000255" key="2">
    <source>
        <dbReference type="PROSITE-ProRule" id="PRU00521"/>
    </source>
</evidence>
<evidence type="ECO:0000305" key="3"/>
<evidence type="ECO:0000312" key="4">
    <source>
        <dbReference type="MGI" id="MGI:3030928"/>
    </source>
</evidence>
<reference key="1">
    <citation type="journal article" date="2002" name="Nat. Neurosci.">
        <title>The olfactory receptor gene superfamily of the mouse.</title>
        <authorList>
            <person name="Zhang X."/>
            <person name="Firestein S."/>
        </authorList>
    </citation>
    <scope>NUCLEOTIDE SEQUENCE [GENOMIC DNA]</scope>
</reference>
<reference key="2">
    <citation type="journal article" date="2002" name="Hum. Mol. Genet.">
        <title>Different evolutionary processes shaped the mouse and human olfactory receptor gene families.</title>
        <authorList>
            <person name="Young J.M."/>
            <person name="Friedman C."/>
            <person name="Williams E.M."/>
            <person name="Ross J.A."/>
            <person name="Tonnes-Priddy L."/>
            <person name="Trask B.J."/>
        </authorList>
    </citation>
    <scope>NUCLEOTIDE SEQUENCE [GENOMIC DNA]</scope>
</reference>
<reference key="3">
    <citation type="journal article" date="2002" name="Hum. Mol. Genet.">
        <authorList>
            <person name="Young J.M."/>
            <person name="Friedman C."/>
            <person name="Williams E.M."/>
            <person name="Ross J.A."/>
            <person name="Tonnes-Priddy L."/>
            <person name="Trask B.J."/>
        </authorList>
    </citation>
    <scope>ERRATUM OF PUBMED:11875048</scope>
</reference>
<sequence length="330" mass="37363">MSIHSPGYTVRRIPVNNVTDTTMFILTGFTDDADLQVLLFLLFFVIYLFTLIGNLGLVLLVIGDSRLHNPMYYFLSVLSFLDACYSTVVTPKMLVNFISNDKSISYPGCVTEMFLFVTFGTTECFLLAAMAYDRFVAIYNPLLYAVKMSPRVYIPLIIACYSGGIMHATIHTVATFSLSFCASNEIRHVFCDIPPLLAISCSNTNINQLLLFYCVGSIEIITILIVLVSYSFILFAILKMNSAEGRRKIFSTCGSHLTGVSIYHGTILFMYVRPSSNYALEHDMIVSTFYTIVIPMLNPIIYSLRNKDVKEAMKKIFERNFFMNKVHFKL</sequence>
<accession>Q8VF13</accession>
<organism>
    <name type="scientific">Mus musculus</name>
    <name type="common">Mouse</name>
    <dbReference type="NCBI Taxonomy" id="10090"/>
    <lineage>
        <taxon>Eukaryota</taxon>
        <taxon>Metazoa</taxon>
        <taxon>Chordata</taxon>
        <taxon>Craniata</taxon>
        <taxon>Vertebrata</taxon>
        <taxon>Euteleostomi</taxon>
        <taxon>Mammalia</taxon>
        <taxon>Eutheria</taxon>
        <taxon>Euarchontoglires</taxon>
        <taxon>Glires</taxon>
        <taxon>Rodentia</taxon>
        <taxon>Myomorpha</taxon>
        <taxon>Muroidea</taxon>
        <taxon>Muridae</taxon>
        <taxon>Murinae</taxon>
        <taxon>Mus</taxon>
        <taxon>Mus</taxon>
    </lineage>
</organism>
<protein>
    <recommendedName>
        <fullName evidence="3">Olfactory receptor 5T9</fullName>
    </recommendedName>
    <alternativeName>
        <fullName>Olfactory receptor 1094</fullName>
    </alternativeName>
    <alternativeName>
        <fullName>Olfactory receptor 179-7</fullName>
    </alternativeName>
</protein>
<dbReference type="EMBL" id="AY073728">
    <property type="protein sequence ID" value="AAL61391.1"/>
    <property type="molecule type" value="Genomic_DNA"/>
</dbReference>
<dbReference type="EMBL" id="AY318291">
    <property type="protein sequence ID" value="AAP71520.1"/>
    <property type="molecule type" value="Genomic_DNA"/>
</dbReference>
<dbReference type="CCDS" id="CCDS16269.1"/>
<dbReference type="RefSeq" id="NP_666477.1">
    <property type="nucleotide sequence ID" value="NM_146365.2"/>
</dbReference>
<dbReference type="SMR" id="Q8VF13"/>
<dbReference type="FunCoup" id="Q8VF13">
    <property type="interactions" value="1212"/>
</dbReference>
<dbReference type="STRING" id="10090.ENSMUSP00000148902"/>
<dbReference type="GlyCosmos" id="Q8VF13">
    <property type="glycosylation" value="1 site, No reported glycans"/>
</dbReference>
<dbReference type="GlyGen" id="Q8VF13">
    <property type="glycosylation" value="1 site"/>
</dbReference>
<dbReference type="PhosphoSitePlus" id="Q8VF13"/>
<dbReference type="PaxDb" id="10090-ENSMUSP00000100846"/>
<dbReference type="DNASU" id="258362"/>
<dbReference type="Ensembl" id="ENSMUST00000105211.4">
    <property type="protein sequence ID" value="ENSMUSP00000100846.2"/>
    <property type="gene ID" value="ENSMUSG00000044213.5"/>
</dbReference>
<dbReference type="Ensembl" id="ENSMUST00000217509.2">
    <property type="protein sequence ID" value="ENSMUSP00000148902.2"/>
    <property type="gene ID" value="ENSMUSG00000044213.5"/>
</dbReference>
<dbReference type="GeneID" id="258362"/>
<dbReference type="KEGG" id="mmu:258362"/>
<dbReference type="UCSC" id="uc008kmz.2">
    <property type="organism name" value="mouse"/>
</dbReference>
<dbReference type="AGR" id="MGI:3030928"/>
<dbReference type="CTD" id="258362"/>
<dbReference type="MGI" id="MGI:3030928">
    <property type="gene designation" value="Or5t9"/>
</dbReference>
<dbReference type="VEuPathDB" id="HostDB:ENSMUSG00000044213"/>
<dbReference type="eggNOG" id="ENOG502SHA3">
    <property type="taxonomic scope" value="Eukaryota"/>
</dbReference>
<dbReference type="GeneTree" id="ENSGT00940000153301"/>
<dbReference type="HOGENOM" id="CLU_012526_1_0_1"/>
<dbReference type="InParanoid" id="Q8VF13"/>
<dbReference type="OMA" id="WFINKLQ"/>
<dbReference type="OrthoDB" id="9827639at2759"/>
<dbReference type="PhylomeDB" id="Q8VF13"/>
<dbReference type="TreeFam" id="TF352753"/>
<dbReference type="BioGRID-ORCS" id="258362">
    <property type="hits" value="3 hits in 71 CRISPR screens"/>
</dbReference>
<dbReference type="PRO" id="PR:Q8VF13"/>
<dbReference type="Proteomes" id="UP000000589">
    <property type="component" value="Chromosome 2"/>
</dbReference>
<dbReference type="RNAct" id="Q8VF13">
    <property type="molecule type" value="protein"/>
</dbReference>
<dbReference type="ExpressionAtlas" id="Q8VF13">
    <property type="expression patterns" value="differential"/>
</dbReference>
<dbReference type="GO" id="GO:0016020">
    <property type="term" value="C:membrane"/>
    <property type="evidence" value="ECO:0000247"/>
    <property type="project" value="MGI"/>
</dbReference>
<dbReference type="GO" id="GO:0005886">
    <property type="term" value="C:plasma membrane"/>
    <property type="evidence" value="ECO:0007669"/>
    <property type="project" value="UniProtKB-SubCell"/>
</dbReference>
<dbReference type="GO" id="GO:0004930">
    <property type="term" value="F:G protein-coupled receptor activity"/>
    <property type="evidence" value="ECO:0007669"/>
    <property type="project" value="UniProtKB-KW"/>
</dbReference>
<dbReference type="GO" id="GO:0004984">
    <property type="term" value="F:olfactory receptor activity"/>
    <property type="evidence" value="ECO:0000247"/>
    <property type="project" value="MGI"/>
</dbReference>
<dbReference type="GO" id="GO:0007186">
    <property type="term" value="P:G protein-coupled receptor signaling pathway"/>
    <property type="evidence" value="ECO:0000247"/>
    <property type="project" value="MGI"/>
</dbReference>
<dbReference type="GO" id="GO:0007608">
    <property type="term" value="P:sensory perception of smell"/>
    <property type="evidence" value="ECO:0000247"/>
    <property type="project" value="MGI"/>
</dbReference>
<dbReference type="FunFam" id="1.20.1070.10:FF:000004">
    <property type="entry name" value="Olfactory receptor"/>
    <property type="match status" value="1"/>
</dbReference>
<dbReference type="Gene3D" id="1.20.1070.10">
    <property type="entry name" value="Rhodopsin 7-helix transmembrane proteins"/>
    <property type="match status" value="1"/>
</dbReference>
<dbReference type="InterPro" id="IPR000276">
    <property type="entry name" value="GPCR_Rhodpsn"/>
</dbReference>
<dbReference type="InterPro" id="IPR017452">
    <property type="entry name" value="GPCR_Rhodpsn_7TM"/>
</dbReference>
<dbReference type="InterPro" id="IPR000725">
    <property type="entry name" value="Olfact_rcpt"/>
</dbReference>
<dbReference type="PANTHER" id="PTHR48018">
    <property type="entry name" value="OLFACTORY RECEPTOR"/>
    <property type="match status" value="1"/>
</dbReference>
<dbReference type="Pfam" id="PF13853">
    <property type="entry name" value="7tm_4"/>
    <property type="match status" value="1"/>
</dbReference>
<dbReference type="PRINTS" id="PR00237">
    <property type="entry name" value="GPCRRHODOPSN"/>
</dbReference>
<dbReference type="PRINTS" id="PR00245">
    <property type="entry name" value="OLFACTORYR"/>
</dbReference>
<dbReference type="SUPFAM" id="SSF81321">
    <property type="entry name" value="Family A G protein-coupled receptor-like"/>
    <property type="match status" value="1"/>
</dbReference>
<dbReference type="PROSITE" id="PS00237">
    <property type="entry name" value="G_PROTEIN_RECEP_F1_1"/>
    <property type="match status" value="1"/>
</dbReference>
<dbReference type="PROSITE" id="PS50262">
    <property type="entry name" value="G_PROTEIN_RECEP_F1_2"/>
    <property type="match status" value="1"/>
</dbReference>
<gene>
    <name evidence="4" type="primary">Or5t9</name>
    <name evidence="4" type="synonym">Mor179-7</name>
    <name evidence="4" type="synonym">Olfr1094</name>
</gene>
<feature type="chain" id="PRO_0000150867" description="Olfactory receptor 5T9">
    <location>
        <begin position="1"/>
        <end position="330"/>
    </location>
</feature>
<feature type="topological domain" description="Extracellular" evidence="1">
    <location>
        <begin position="1"/>
        <end position="37"/>
    </location>
</feature>
<feature type="transmembrane region" description="Helical; Name=1" evidence="1">
    <location>
        <begin position="38"/>
        <end position="58"/>
    </location>
</feature>
<feature type="topological domain" description="Cytoplasmic" evidence="1">
    <location>
        <begin position="59"/>
        <end position="66"/>
    </location>
</feature>
<feature type="transmembrane region" description="Helical; Name=2" evidence="1">
    <location>
        <begin position="67"/>
        <end position="87"/>
    </location>
</feature>
<feature type="topological domain" description="Extracellular" evidence="1">
    <location>
        <begin position="88"/>
        <end position="111"/>
    </location>
</feature>
<feature type="transmembrane region" description="Helical; Name=3" evidence="1">
    <location>
        <begin position="112"/>
        <end position="132"/>
    </location>
</feature>
<feature type="topological domain" description="Cytoplasmic" evidence="1">
    <location>
        <begin position="133"/>
        <end position="145"/>
    </location>
</feature>
<feature type="transmembrane region" description="Helical; Name=4" evidence="1">
    <location>
        <begin position="146"/>
        <end position="166"/>
    </location>
</feature>
<feature type="topological domain" description="Extracellular" evidence="1">
    <location>
        <begin position="167"/>
        <end position="208"/>
    </location>
</feature>
<feature type="transmembrane region" description="Helical; Name=5" evidence="1">
    <location>
        <begin position="209"/>
        <end position="229"/>
    </location>
</feature>
<feature type="topological domain" description="Cytoplasmic" evidence="1">
    <location>
        <begin position="230"/>
        <end position="249"/>
    </location>
</feature>
<feature type="transmembrane region" description="Helical; Name=6" evidence="1">
    <location>
        <begin position="250"/>
        <end position="270"/>
    </location>
</feature>
<feature type="topological domain" description="Extracellular" evidence="1">
    <location>
        <begin position="271"/>
        <end position="283"/>
    </location>
</feature>
<feature type="transmembrane region" description="Helical; Name=7" evidence="1">
    <location>
        <begin position="284"/>
        <end position="304"/>
    </location>
</feature>
<feature type="topological domain" description="Cytoplasmic" evidence="1">
    <location>
        <begin position="305"/>
        <end position="330"/>
    </location>
</feature>
<feature type="glycosylation site" description="N-linked (GlcNAc...) asparagine" evidence="1">
    <location>
        <position position="17"/>
    </location>
</feature>
<feature type="disulfide bond" evidence="2">
    <location>
        <begin position="109"/>
        <end position="201"/>
    </location>
</feature>
<proteinExistence type="inferred from homology"/>